<evidence type="ECO:0000255" key="1">
    <source>
        <dbReference type="HAMAP-Rule" id="MF_00440"/>
    </source>
</evidence>
<feature type="chain" id="PRO_0000264198" description="Transcriptional repressor NrdR">
    <location>
        <begin position="1"/>
        <end position="155"/>
    </location>
</feature>
<feature type="domain" description="ATP-cone" evidence="1">
    <location>
        <begin position="49"/>
        <end position="139"/>
    </location>
</feature>
<feature type="zinc finger region" evidence="1">
    <location>
        <begin position="3"/>
        <end position="34"/>
    </location>
</feature>
<name>NRDR_CUPMC</name>
<organism>
    <name type="scientific">Cupriavidus metallidurans (strain ATCC 43123 / DSM 2839 / NBRC 102507 / CH34)</name>
    <name type="common">Ralstonia metallidurans</name>
    <dbReference type="NCBI Taxonomy" id="266264"/>
    <lineage>
        <taxon>Bacteria</taxon>
        <taxon>Pseudomonadati</taxon>
        <taxon>Pseudomonadota</taxon>
        <taxon>Betaproteobacteria</taxon>
        <taxon>Burkholderiales</taxon>
        <taxon>Burkholderiaceae</taxon>
        <taxon>Cupriavidus</taxon>
    </lineage>
</organism>
<accession>Q1LJX2</accession>
<dbReference type="EMBL" id="CP000352">
    <property type="protein sequence ID" value="ABF09554.1"/>
    <property type="molecule type" value="Genomic_DNA"/>
</dbReference>
<dbReference type="RefSeq" id="WP_011517254.1">
    <property type="nucleotide sequence ID" value="NC_007973.1"/>
</dbReference>
<dbReference type="SMR" id="Q1LJX2"/>
<dbReference type="STRING" id="266264.Rmet_2681"/>
<dbReference type="KEGG" id="rme:Rmet_2681"/>
<dbReference type="eggNOG" id="COG1327">
    <property type="taxonomic scope" value="Bacteria"/>
</dbReference>
<dbReference type="HOGENOM" id="CLU_108412_0_0_4"/>
<dbReference type="Proteomes" id="UP000002429">
    <property type="component" value="Chromosome"/>
</dbReference>
<dbReference type="GO" id="GO:0005524">
    <property type="term" value="F:ATP binding"/>
    <property type="evidence" value="ECO:0007669"/>
    <property type="project" value="UniProtKB-KW"/>
</dbReference>
<dbReference type="GO" id="GO:0003677">
    <property type="term" value="F:DNA binding"/>
    <property type="evidence" value="ECO:0007669"/>
    <property type="project" value="UniProtKB-KW"/>
</dbReference>
<dbReference type="GO" id="GO:0008270">
    <property type="term" value="F:zinc ion binding"/>
    <property type="evidence" value="ECO:0007669"/>
    <property type="project" value="UniProtKB-UniRule"/>
</dbReference>
<dbReference type="GO" id="GO:0045892">
    <property type="term" value="P:negative regulation of DNA-templated transcription"/>
    <property type="evidence" value="ECO:0007669"/>
    <property type="project" value="UniProtKB-UniRule"/>
</dbReference>
<dbReference type="HAMAP" id="MF_00440">
    <property type="entry name" value="NrdR"/>
    <property type="match status" value="1"/>
</dbReference>
<dbReference type="InterPro" id="IPR005144">
    <property type="entry name" value="ATP-cone_dom"/>
</dbReference>
<dbReference type="InterPro" id="IPR055173">
    <property type="entry name" value="NrdR-like_N"/>
</dbReference>
<dbReference type="InterPro" id="IPR003796">
    <property type="entry name" value="RNR_NrdR-like"/>
</dbReference>
<dbReference type="NCBIfam" id="TIGR00244">
    <property type="entry name" value="transcriptional regulator NrdR"/>
    <property type="match status" value="1"/>
</dbReference>
<dbReference type="PANTHER" id="PTHR30455">
    <property type="entry name" value="TRANSCRIPTIONAL REPRESSOR NRDR"/>
    <property type="match status" value="1"/>
</dbReference>
<dbReference type="PANTHER" id="PTHR30455:SF2">
    <property type="entry name" value="TRANSCRIPTIONAL REPRESSOR NRDR"/>
    <property type="match status" value="1"/>
</dbReference>
<dbReference type="Pfam" id="PF03477">
    <property type="entry name" value="ATP-cone"/>
    <property type="match status" value="1"/>
</dbReference>
<dbReference type="Pfam" id="PF22811">
    <property type="entry name" value="Zn_ribbon_NrdR"/>
    <property type="match status" value="1"/>
</dbReference>
<dbReference type="PROSITE" id="PS51161">
    <property type="entry name" value="ATP_CONE"/>
    <property type="match status" value="1"/>
</dbReference>
<protein>
    <recommendedName>
        <fullName evidence="1">Transcriptional repressor NrdR</fullName>
    </recommendedName>
</protein>
<comment type="function">
    <text evidence="1">Negatively regulates transcription of bacterial ribonucleotide reductase nrd genes and operons by binding to NrdR-boxes.</text>
</comment>
<comment type="cofactor">
    <cofactor evidence="1">
        <name>Zn(2+)</name>
        <dbReference type="ChEBI" id="CHEBI:29105"/>
    </cofactor>
    <text evidence="1">Binds 1 zinc ion.</text>
</comment>
<comment type="similarity">
    <text evidence="1">Belongs to the NrdR family.</text>
</comment>
<gene>
    <name evidence="1" type="primary">nrdR</name>
    <name type="ordered locus">Rmet_2681</name>
</gene>
<reference key="1">
    <citation type="journal article" date="2010" name="PLoS ONE">
        <title>The complete genome sequence of Cupriavidus metallidurans strain CH34, a master survivalist in harsh and anthropogenic environments.</title>
        <authorList>
            <person name="Janssen P.J."/>
            <person name="Van Houdt R."/>
            <person name="Moors H."/>
            <person name="Monsieurs P."/>
            <person name="Morin N."/>
            <person name="Michaux A."/>
            <person name="Benotmane M.A."/>
            <person name="Leys N."/>
            <person name="Vallaeys T."/>
            <person name="Lapidus A."/>
            <person name="Monchy S."/>
            <person name="Medigue C."/>
            <person name="Taghavi S."/>
            <person name="McCorkle S."/>
            <person name="Dunn J."/>
            <person name="van der Lelie D."/>
            <person name="Mergeay M."/>
        </authorList>
    </citation>
    <scope>NUCLEOTIDE SEQUENCE [LARGE SCALE GENOMIC DNA]</scope>
    <source>
        <strain>ATCC 43123 / DSM 2839 / NBRC 102507 / CH34</strain>
    </source>
</reference>
<sequence length="155" mass="17977">MKCPFCGHSSTQVLDSRVSEDGDTVRRRRRCEACDRRFTTYERIELFFPAIVKKNGSRVDYARAKLKDSMRLALRKRPVSAEAIDEAITRIEEKLLALGEKEIPSSQVGELVMRELRKLDKIAYIRFASVYRSFEDVSEFREMLDEFSSSTPRKG</sequence>
<keyword id="KW-0067">ATP-binding</keyword>
<keyword id="KW-0238">DNA-binding</keyword>
<keyword id="KW-0479">Metal-binding</keyword>
<keyword id="KW-0547">Nucleotide-binding</keyword>
<keyword id="KW-1185">Reference proteome</keyword>
<keyword id="KW-0678">Repressor</keyword>
<keyword id="KW-0804">Transcription</keyword>
<keyword id="KW-0805">Transcription regulation</keyword>
<keyword id="KW-0862">Zinc</keyword>
<keyword id="KW-0863">Zinc-finger</keyword>
<proteinExistence type="inferred from homology"/>